<comment type="subcellular location">
    <subcellularLocation>
        <location evidence="1">Mitochondrion</location>
    </subcellularLocation>
</comment>
<comment type="sequence caution" evidence="3">
    <conflict type="erroneous gene model prediction">
        <sequence resource="EMBL-CDS" id="AAX69356"/>
    </conflict>
</comment>
<comment type="sequence caution" evidence="3">
    <conflict type="erroneous gene model prediction">
        <sequence resource="EMBL-CDS" id="AAZ12839"/>
    </conflict>
</comment>
<evidence type="ECO:0000255" key="1"/>
<evidence type="ECO:0000256" key="2">
    <source>
        <dbReference type="SAM" id="MobiDB-lite"/>
    </source>
</evidence>
<evidence type="ECO:0000305" key="3"/>
<evidence type="ECO:0000312" key="4">
    <source>
        <dbReference type="EMBL" id="AAX69356.1"/>
    </source>
</evidence>
<evidence type="ECO:0000312" key="5">
    <source>
        <dbReference type="Proteomes" id="UP000008524"/>
    </source>
</evidence>
<sequence>MFSSTFRRLAIRPLNRVTMVGAMHDIQVGFLDRCSVFQFTLTCTVLDFQKVAEPQPKSPGSLPSSTRTAPNPNGEEVEKHINKEQYTVRCLGSEAYTEALKNYLDDGCIVRVIGRLKTTEVVDAGKKQPFPCIIVEQGRWSTVSLVHSLRKQRRDWQLQNILTSVATLE</sequence>
<gene>
    <name evidence="4" type="ORF">Tb927.8.680</name>
</gene>
<organism>
    <name type="scientific">Trypanosoma brucei brucei (strain 927/4 GUTat10.1)</name>
    <dbReference type="NCBI Taxonomy" id="185431"/>
    <lineage>
        <taxon>Eukaryota</taxon>
        <taxon>Discoba</taxon>
        <taxon>Euglenozoa</taxon>
        <taxon>Kinetoplastea</taxon>
        <taxon>Metakinetoplastina</taxon>
        <taxon>Trypanosomatida</taxon>
        <taxon>Trypanosomatidae</taxon>
        <taxon>Trypanosoma</taxon>
    </lineage>
</organism>
<keyword id="KW-0496">Mitochondrion</keyword>
<keyword id="KW-1185">Reference proteome</keyword>
<keyword id="KW-0809">Transit peptide</keyword>
<feature type="transit peptide" description="Mitochondrion" evidence="1">
    <location>
        <begin position="1"/>
        <end position="91"/>
    </location>
</feature>
<feature type="chain" id="PRO_0000437217" description="Uncharacterized protein Tb927.8.680, mitochondrial">
    <location>
        <begin position="92"/>
        <end position="169"/>
    </location>
</feature>
<feature type="region of interest" description="Disordered" evidence="2">
    <location>
        <begin position="54"/>
        <end position="76"/>
    </location>
</feature>
<feature type="compositionally biased region" description="Polar residues" evidence="2">
    <location>
        <begin position="61"/>
        <end position="71"/>
    </location>
</feature>
<proteinExistence type="inferred from homology"/>
<protein>
    <recommendedName>
        <fullName evidence="3">Uncharacterized protein Tb927.8.680, mitochondrial</fullName>
    </recommendedName>
</protein>
<accession>Q57YG2</accession>
<accession>D6XMN6</accession>
<reference key="1">
    <citation type="journal article" date="2005" name="Science">
        <title>The genome of the African trypanosome Trypanosoma brucei.</title>
        <authorList>
            <person name="Berriman M."/>
            <person name="Ghedin E."/>
            <person name="Hertz-Fowler C."/>
            <person name="Blandin G."/>
            <person name="Renauld H."/>
            <person name="Bartholomeu D.C."/>
            <person name="Lennard N.J."/>
            <person name="Caler E."/>
            <person name="Hamlin N.E."/>
            <person name="Haas B."/>
            <person name="Bohme U."/>
            <person name="Hannick L."/>
            <person name="Aslett M.A."/>
            <person name="Shallom J."/>
            <person name="Marcello L."/>
            <person name="Hou L."/>
            <person name="Wickstead B."/>
            <person name="Alsmark U.C.M."/>
            <person name="Arrowsmith C."/>
            <person name="Atkin R.J."/>
            <person name="Barron A.J."/>
            <person name="Bringaud F."/>
            <person name="Brooks K."/>
            <person name="Carrington M."/>
            <person name="Cherevach I."/>
            <person name="Chillingworth T.J."/>
            <person name="Churcher C."/>
            <person name="Clark L.N."/>
            <person name="Corton C.H."/>
            <person name="Cronin A."/>
            <person name="Davies R.M."/>
            <person name="Doggett J."/>
            <person name="Djikeng A."/>
            <person name="Feldblyum T."/>
            <person name="Field M.C."/>
            <person name="Fraser A."/>
            <person name="Goodhead I."/>
            <person name="Hance Z."/>
            <person name="Harper D."/>
            <person name="Harris B.R."/>
            <person name="Hauser H."/>
            <person name="Hostetler J."/>
            <person name="Ivens A."/>
            <person name="Jagels K."/>
            <person name="Johnson D."/>
            <person name="Johnson J."/>
            <person name="Jones K."/>
            <person name="Kerhornou A.X."/>
            <person name="Koo H."/>
            <person name="Larke N."/>
            <person name="Landfear S."/>
            <person name="Larkin C."/>
            <person name="Leech V."/>
            <person name="Line A."/>
            <person name="Lord A."/>
            <person name="Macleod A."/>
            <person name="Mooney P.J."/>
            <person name="Moule S."/>
            <person name="Martin D.M."/>
            <person name="Morgan G.W."/>
            <person name="Mungall K."/>
            <person name="Norbertczak H."/>
            <person name="Ormond D."/>
            <person name="Pai G."/>
            <person name="Peacock C.S."/>
            <person name="Peterson J."/>
            <person name="Quail M.A."/>
            <person name="Rabbinowitsch E."/>
            <person name="Rajandream M.A."/>
            <person name="Reitter C."/>
            <person name="Salzberg S.L."/>
            <person name="Sanders M."/>
            <person name="Schobel S."/>
            <person name="Sharp S."/>
            <person name="Simmonds M."/>
            <person name="Simpson A.J."/>
            <person name="Tallon L."/>
            <person name="Turner C.M."/>
            <person name="Tait A."/>
            <person name="Tivey A.R."/>
            <person name="Van Aken S."/>
            <person name="Walker D."/>
            <person name="Wanless D."/>
            <person name="Wang S."/>
            <person name="White B."/>
            <person name="White O."/>
            <person name="Whitehead S."/>
            <person name="Woodward J."/>
            <person name="Wortman J."/>
            <person name="Adams M.D."/>
            <person name="Embley T.M."/>
            <person name="Gull K."/>
            <person name="Ullu E."/>
            <person name="Barry J.D."/>
            <person name="Fairlamb A.H."/>
            <person name="Opperdoes F."/>
            <person name="Barrell B.G."/>
            <person name="Donelson J.E."/>
            <person name="Hall N."/>
            <person name="Fraser C.M."/>
            <person name="Melville S.E."/>
            <person name="El-Sayed N.M.A."/>
        </authorList>
    </citation>
    <scope>NUCLEOTIDE SEQUENCE [LARGE SCALE GENOMIC DNA]</scope>
    <source>
        <strain evidence="5">927/4 GUTat10.1</strain>
    </source>
</reference>
<name>TB927_TRYB2</name>
<dbReference type="EMBL" id="AC159407">
    <property type="protein sequence ID" value="AAX69356.1"/>
    <property type="status" value="ALT_SEQ"/>
    <property type="molecule type" value="Genomic_DNA"/>
</dbReference>
<dbReference type="EMBL" id="CP000071">
    <property type="protein sequence ID" value="AAZ12839.1"/>
    <property type="status" value="ALT_SEQ"/>
    <property type="molecule type" value="Genomic_DNA"/>
</dbReference>
<dbReference type="RefSeq" id="XP_846905.1">
    <property type="nucleotide sequence ID" value="XM_841812.1"/>
</dbReference>
<dbReference type="SMR" id="Q57YG2"/>
<dbReference type="STRING" id="185431.Q57YG2"/>
<dbReference type="PaxDb" id="5691-AAZ12839"/>
<dbReference type="GeneID" id="3659044"/>
<dbReference type="KEGG" id="tbr:Tb927.8.680"/>
<dbReference type="VEuPathDB" id="TriTrypDB:Tb927.8.680"/>
<dbReference type="InParanoid" id="Q57YG2"/>
<dbReference type="OrthoDB" id="239615at2759"/>
<dbReference type="Proteomes" id="UP000008524">
    <property type="component" value="Chromosome 8"/>
</dbReference>
<dbReference type="GO" id="GO:0005737">
    <property type="term" value="C:cytoplasm"/>
    <property type="evidence" value="ECO:0000314"/>
    <property type="project" value="GeneDB"/>
</dbReference>
<dbReference type="GO" id="GO:0005739">
    <property type="term" value="C:mitochondrion"/>
    <property type="evidence" value="ECO:0000314"/>
    <property type="project" value="GeneDB"/>
</dbReference>
<dbReference type="CDD" id="cd23961">
    <property type="entry name" value="KREPA5"/>
    <property type="match status" value="1"/>
</dbReference>
<dbReference type="Gene3D" id="2.40.50.140">
    <property type="entry name" value="Nucleic acid-binding proteins"/>
    <property type="match status" value="1"/>
</dbReference>
<dbReference type="InterPro" id="IPR012340">
    <property type="entry name" value="NA-bd_OB-fold"/>
</dbReference>
<dbReference type="PANTHER" id="PTHR40735:SF3">
    <property type="entry name" value="RNA-EDITING COMPLEX PROTEIN MP42"/>
    <property type="match status" value="1"/>
</dbReference>
<dbReference type="PANTHER" id="PTHR40735">
    <property type="entry name" value="RNA-EDITING COMPLEX PROTEIN MP42-RELATED"/>
    <property type="match status" value="1"/>
</dbReference>